<accession>Q7N6E9</accession>
<gene>
    <name evidence="1" type="primary">lolA</name>
    <name type="ordered locus">plu1602</name>
</gene>
<name>LOLA_PHOLL</name>
<proteinExistence type="inferred from homology"/>
<feature type="signal peptide" evidence="1">
    <location>
        <begin position="1"/>
        <end position="21"/>
    </location>
</feature>
<feature type="chain" id="PRO_0000018268" description="Outer-membrane lipoprotein carrier protein">
    <location>
        <begin position="22"/>
        <end position="203"/>
    </location>
</feature>
<keyword id="KW-0143">Chaperone</keyword>
<keyword id="KW-0574">Periplasm</keyword>
<keyword id="KW-0653">Protein transport</keyword>
<keyword id="KW-1185">Reference proteome</keyword>
<keyword id="KW-0732">Signal</keyword>
<keyword id="KW-0813">Transport</keyword>
<reference key="1">
    <citation type="journal article" date="2003" name="Nat. Biotechnol.">
        <title>The genome sequence of the entomopathogenic bacterium Photorhabdus luminescens.</title>
        <authorList>
            <person name="Duchaud E."/>
            <person name="Rusniok C."/>
            <person name="Frangeul L."/>
            <person name="Buchrieser C."/>
            <person name="Givaudan A."/>
            <person name="Taourit S."/>
            <person name="Bocs S."/>
            <person name="Boursaux-Eude C."/>
            <person name="Chandler M."/>
            <person name="Charles J.-F."/>
            <person name="Dassa E."/>
            <person name="Derose R."/>
            <person name="Derzelle S."/>
            <person name="Freyssinet G."/>
            <person name="Gaudriault S."/>
            <person name="Medigue C."/>
            <person name="Lanois A."/>
            <person name="Powell K."/>
            <person name="Siguier P."/>
            <person name="Vincent R."/>
            <person name="Wingate V."/>
            <person name="Zouine M."/>
            <person name="Glaser P."/>
            <person name="Boemare N."/>
            <person name="Danchin A."/>
            <person name="Kunst F."/>
        </authorList>
    </citation>
    <scope>NUCLEOTIDE SEQUENCE [LARGE SCALE GENOMIC DNA]</scope>
    <source>
        <strain>DSM 15139 / CIP 105565 / TT01</strain>
    </source>
</reference>
<comment type="function">
    <text evidence="1">Participates in the translocation of lipoproteins from the inner membrane to the outer membrane. Only forms a complex with a lipoprotein if the residue after the N-terminal Cys is not an aspartate (The Asp acts as a targeting signal to indicate that the lipoprotein should stay in the inner membrane).</text>
</comment>
<comment type="subunit">
    <text evidence="1">Monomer.</text>
</comment>
<comment type="subcellular location">
    <subcellularLocation>
        <location evidence="1">Periplasm</location>
    </subcellularLocation>
</comment>
<comment type="similarity">
    <text evidence="1">Belongs to the LolA family.</text>
</comment>
<evidence type="ECO:0000255" key="1">
    <source>
        <dbReference type="HAMAP-Rule" id="MF_00240"/>
    </source>
</evidence>
<organism>
    <name type="scientific">Photorhabdus laumondii subsp. laumondii (strain DSM 15139 / CIP 105565 / TT01)</name>
    <name type="common">Photorhabdus luminescens subsp. laumondii</name>
    <dbReference type="NCBI Taxonomy" id="243265"/>
    <lineage>
        <taxon>Bacteria</taxon>
        <taxon>Pseudomonadati</taxon>
        <taxon>Pseudomonadota</taxon>
        <taxon>Gammaproteobacteria</taxon>
        <taxon>Enterobacterales</taxon>
        <taxon>Morganellaceae</taxon>
        <taxon>Photorhabdus</taxon>
    </lineage>
</organism>
<sequence length="203" mass="22785">MKKLILIGCLMAGMNINVAWANASQNLQERLGKVNSFHASFTQTVTSDDGATIQEGEGQLWVKRPNLFNWHMTSPDESVLVSDGKTLWFYNPFVEQVTANWLKDATGNTPFMLITRNDAKEWSQYKISQQGNDFELTPNNVTGNLKRFSITVTTDGTIQKFSAIEQDGQKSAYQLKGQQNTHVDAAKFSFTLPKGVTLDDQRQ</sequence>
<dbReference type="EMBL" id="BX571864">
    <property type="protein sequence ID" value="CAE13895.1"/>
    <property type="molecule type" value="Genomic_DNA"/>
</dbReference>
<dbReference type="RefSeq" id="WP_011145898.1">
    <property type="nucleotide sequence ID" value="NC_005126.1"/>
</dbReference>
<dbReference type="SMR" id="Q7N6E9"/>
<dbReference type="STRING" id="243265.plu1602"/>
<dbReference type="GeneID" id="48847890"/>
<dbReference type="KEGG" id="plu:plu1602"/>
<dbReference type="eggNOG" id="COG2834">
    <property type="taxonomic scope" value="Bacteria"/>
</dbReference>
<dbReference type="HOGENOM" id="CLU_087560_1_1_6"/>
<dbReference type="OrthoDB" id="9787361at2"/>
<dbReference type="Proteomes" id="UP000002514">
    <property type="component" value="Chromosome"/>
</dbReference>
<dbReference type="GO" id="GO:0030288">
    <property type="term" value="C:outer membrane-bounded periplasmic space"/>
    <property type="evidence" value="ECO:0007669"/>
    <property type="project" value="TreeGrafter"/>
</dbReference>
<dbReference type="GO" id="GO:0044874">
    <property type="term" value="P:lipoprotein localization to outer membrane"/>
    <property type="evidence" value="ECO:0007669"/>
    <property type="project" value="UniProtKB-UniRule"/>
</dbReference>
<dbReference type="GO" id="GO:0042953">
    <property type="term" value="P:lipoprotein transport"/>
    <property type="evidence" value="ECO:0007669"/>
    <property type="project" value="InterPro"/>
</dbReference>
<dbReference type="CDD" id="cd16325">
    <property type="entry name" value="LolA"/>
    <property type="match status" value="1"/>
</dbReference>
<dbReference type="FunFam" id="2.50.20.10:FF:000001">
    <property type="entry name" value="Outer-membrane lipoprotein carrier protein"/>
    <property type="match status" value="1"/>
</dbReference>
<dbReference type="Gene3D" id="2.50.20.10">
    <property type="entry name" value="Lipoprotein localisation LolA/LolB/LppX"/>
    <property type="match status" value="1"/>
</dbReference>
<dbReference type="HAMAP" id="MF_00240">
    <property type="entry name" value="LolA"/>
    <property type="match status" value="1"/>
</dbReference>
<dbReference type="InterPro" id="IPR029046">
    <property type="entry name" value="LolA/LolB/LppX"/>
</dbReference>
<dbReference type="InterPro" id="IPR004564">
    <property type="entry name" value="OM_lipoprot_carrier_LolA-like"/>
</dbReference>
<dbReference type="InterPro" id="IPR018323">
    <property type="entry name" value="OM_lipoprot_carrier_LolA_Pbac"/>
</dbReference>
<dbReference type="NCBIfam" id="TIGR00547">
    <property type="entry name" value="lolA"/>
    <property type="match status" value="1"/>
</dbReference>
<dbReference type="PANTHER" id="PTHR35869">
    <property type="entry name" value="OUTER-MEMBRANE LIPOPROTEIN CARRIER PROTEIN"/>
    <property type="match status" value="1"/>
</dbReference>
<dbReference type="PANTHER" id="PTHR35869:SF1">
    <property type="entry name" value="OUTER-MEMBRANE LIPOPROTEIN CARRIER PROTEIN"/>
    <property type="match status" value="1"/>
</dbReference>
<dbReference type="Pfam" id="PF03548">
    <property type="entry name" value="LolA"/>
    <property type="match status" value="1"/>
</dbReference>
<dbReference type="SUPFAM" id="SSF89392">
    <property type="entry name" value="Prokaryotic lipoproteins and lipoprotein localization factors"/>
    <property type="match status" value="1"/>
</dbReference>
<protein>
    <recommendedName>
        <fullName evidence="1">Outer-membrane lipoprotein carrier protein</fullName>
    </recommendedName>
</protein>